<accession>E7Q653</accession>
<comment type="function">
    <text evidence="1">Component of the biogenesis of lysosome-related organelles complex-1 (BLOC-1) involved in endosomal cargo sorting.</text>
</comment>
<comment type="subunit">
    <text evidence="1">Component of the biogenesis of lysosome-related organelles complex-1 (BLOC-1) composed of at least BLI1, BLS1, CNL1, KXD1, SNN1 and VAB2.</text>
</comment>
<comment type="subcellular location">
    <subcellularLocation>
        <location evidence="1">Endosome</location>
    </subcellularLocation>
</comment>
<comment type="similarity">
    <text evidence="3">Belongs to the BLI1 family.</text>
</comment>
<sequence>MGEQNKLYYDVEKLVNSLQESFDLDCAQSVSLFTSKSRSNEAWLEELENKFKLKDDVELDDVENLRAEIDMKLNMLEDKVSYYERLYKELEEFQNEIKIKTVVNNRRQSRTPK</sequence>
<reference key="1">
    <citation type="journal article" date="2011" name="PLoS Genet.">
        <title>Whole-genome comparison reveals novel genetic elements that characterize the genome of industrial strains of Saccharomyces cerevisiae.</title>
        <authorList>
            <person name="Borneman A.R."/>
            <person name="Desany B.A."/>
            <person name="Riches D."/>
            <person name="Affourtit J.P."/>
            <person name="Forgan A.H."/>
            <person name="Pretorius I.S."/>
            <person name="Egholm M."/>
            <person name="Chambers P.J."/>
        </authorList>
    </citation>
    <scope>NUCLEOTIDE SEQUENCE [LARGE SCALE GENOMIC DNA]</scope>
    <source>
        <strain>FostersB</strain>
    </source>
</reference>
<dbReference type="EMBL" id="AEHH01000047">
    <property type="protein sequence ID" value="EGA57866.1"/>
    <property type="molecule type" value="Genomic_DNA"/>
</dbReference>
<dbReference type="HOGENOM" id="CLU_168467_0_0_1"/>
<dbReference type="OrthoDB" id="4059150at2759"/>
<dbReference type="GO" id="GO:0005768">
    <property type="term" value="C:endosome"/>
    <property type="evidence" value="ECO:0007669"/>
    <property type="project" value="UniProtKB-SubCell"/>
</dbReference>
<dbReference type="InterPro" id="IPR020491">
    <property type="entry name" value="BLI1"/>
</dbReference>
<dbReference type="Pfam" id="PF17324">
    <property type="entry name" value="BLI1"/>
    <property type="match status" value="1"/>
</dbReference>
<keyword id="KW-0175">Coiled coil</keyword>
<keyword id="KW-0967">Endosome</keyword>
<keyword id="KW-0813">Transport</keyword>
<gene>
    <name type="primary">BLI1</name>
    <name type="ORF">FOSTERSB_2857</name>
</gene>
<proteinExistence type="inferred from homology"/>
<feature type="chain" id="PRO_0000410622" description="Biogenesis of lysosome-related organelles complex 1 subunit BLI1">
    <location>
        <begin position="1"/>
        <end position="113"/>
    </location>
</feature>
<feature type="coiled-coil region" evidence="2">
    <location>
        <begin position="57"/>
        <end position="97"/>
    </location>
</feature>
<evidence type="ECO:0000250" key="1"/>
<evidence type="ECO:0000255" key="2"/>
<evidence type="ECO:0000305" key="3"/>
<name>BLI1_YEASB</name>
<protein>
    <recommendedName>
        <fullName>Biogenesis of lysosome-related organelles complex 1 subunit BLI1</fullName>
        <shortName>BLOC-1 subunit BLI1</shortName>
    </recommendedName>
    <alternativeName>
        <fullName>BLOC-1 interactor 1</fullName>
    </alternativeName>
</protein>
<organism>
    <name type="scientific">Saccharomyces cerevisiae (strain FostersB)</name>
    <name type="common">Baker's yeast</name>
    <dbReference type="NCBI Taxonomy" id="764102"/>
    <lineage>
        <taxon>Eukaryota</taxon>
        <taxon>Fungi</taxon>
        <taxon>Dikarya</taxon>
        <taxon>Ascomycota</taxon>
        <taxon>Saccharomycotina</taxon>
        <taxon>Saccharomycetes</taxon>
        <taxon>Saccharomycetales</taxon>
        <taxon>Saccharomycetaceae</taxon>
        <taxon>Saccharomyces</taxon>
    </lineage>
</organism>